<name>RLK6_ARATH</name>
<reference key="1">
    <citation type="journal article" date="2010" name="BMC Genomics">
        <title>Genome-wide cloning and sequence analysis of leucine-rich repeat receptor-like protein kinase genes in Arabidopsis thaliana.</title>
        <authorList>
            <person name="Gou X."/>
            <person name="He K."/>
            <person name="Yang H."/>
            <person name="Yuan T."/>
            <person name="Lin H."/>
            <person name="Clouse S.D."/>
            <person name="Li J."/>
        </authorList>
    </citation>
    <scope>NUCLEOTIDE SEQUENCE [MRNA]</scope>
    <source>
        <strain>cv. Columbia</strain>
    </source>
</reference>
<reference key="2">
    <citation type="journal article" date="2000" name="DNA Res.">
        <title>Structural analysis of Arabidopsis thaliana chromosome 3. II. Sequence features of the 4,251,695 bp regions covered by 90 P1, TAC and BAC clones.</title>
        <authorList>
            <person name="Kaneko T."/>
            <person name="Katoh T."/>
            <person name="Sato S."/>
            <person name="Nakamura Y."/>
            <person name="Asamizu E."/>
            <person name="Tabata S."/>
        </authorList>
    </citation>
    <scope>NUCLEOTIDE SEQUENCE [LARGE SCALE GENOMIC DNA]</scope>
    <source>
        <strain>cv. Columbia</strain>
    </source>
</reference>
<reference key="3">
    <citation type="journal article" date="2017" name="Plant J.">
        <title>Araport11: a complete reannotation of the Arabidopsis thaliana reference genome.</title>
        <authorList>
            <person name="Cheng C.Y."/>
            <person name="Krishnakumar V."/>
            <person name="Chan A.P."/>
            <person name="Thibaud-Nissen F."/>
            <person name="Schobel S."/>
            <person name="Town C.D."/>
        </authorList>
    </citation>
    <scope>GENOME REANNOTATION</scope>
    <source>
        <strain>cv. Columbia</strain>
    </source>
</reference>
<reference key="4">
    <citation type="journal article" date="2009" name="Proc. Natl. Acad. Sci. U.S.A.">
        <title>Tyrosine phosphorylation of the BRI1 receptor kinase emerges as a component of brassinosteroid signaling in Arabidopsis.</title>
        <authorList>
            <person name="Oh M.-H."/>
            <person name="Wang X."/>
            <person name="Kota U."/>
            <person name="Goshe M.B."/>
            <person name="Clouse S.D."/>
            <person name="Huber S.C."/>
        </authorList>
    </citation>
    <scope>FUNCTION</scope>
    <scope>AUTOPHOSPHORYLATION</scope>
</reference>
<gene>
    <name type="ordered locus">At3g21340</name>
    <name type="ORF">MHC9.2</name>
</gene>
<sequence length="899" mass="100195">MEYHPQAIRLCALIFISFYALLHLVEAQDQKGFISLDCGSLPNEPPYNDPSTGLTYSTDDGFVQSGKTGRIQKAFESIFSKPSLKLRYFPDGFRNCYTLNVTQDTNYLIKAVFVYGNYDGLNNPPSFDLYLGPNLWVTVDMNGRTNGTIQEIIHKTISKSLQVCLVKTGTSSPMINTLELRPLKNNTYNTQSGSLKYFFRYYFSGSGQNIRYPDDVNDRKWYPFFDAKEWTELTTNLNINSSNGYAPPEVVMASASTPISTFGTWNFSWLLPSSTTQFYVYMHFAEIQTLRSLDTREFKVTLNGKLAYERYSPKTLATETIFYSTPQQCEDGTCLLELTKTPKSTLPPLMNALEVFTVIDFPQMETNPDDVAAIKSIQSTYGLSKISWQGDPCVPKQFLWEGLNCNNLDNSTPPIVTSLNLSSSHLTGIIAQGIQNLTHLQELDLSNNNLTGGIPEFLADIKSLLVINLSGNNFNGSIPQILLQKKGLKLILEGNANLICPDGLCVNKAGNGGAKKMNVVIPIVASVAFVVVLGSALAFFFIFKKKKTSNSQDLGPSSYTQVSEVRTIRSSESAIMTKNRRFTYSEVVTMTNNFERVLGKGGFGMVYHGTVNNTEQVAVKMLSHSSSQGYKEFKAEVELLLRVHHKNLVGLVGYCDEGENLALIYEYMANGDLREHMSGKRGGSILNWETRLKIVVESAQGLEYLHNGCKPPMVHRDVKTTNILLNEHLHAKLADFGLSRSFPIEGETHVSTVVAGTPGYLDPEYYRTNWLNEKSDVYSFGIVLLEIITNQLVINQSREKPHIAEWVGLMLTKGDIQNIMDPKLYGDYDSGSVWRAVELAMSCLNPSSARRPTMSQVVIELNECLSYENARGGTSQNMNSESSIEVSMNFDIGATPDAR</sequence>
<organism>
    <name type="scientific">Arabidopsis thaliana</name>
    <name type="common">Mouse-ear cress</name>
    <dbReference type="NCBI Taxonomy" id="3702"/>
    <lineage>
        <taxon>Eukaryota</taxon>
        <taxon>Viridiplantae</taxon>
        <taxon>Streptophyta</taxon>
        <taxon>Embryophyta</taxon>
        <taxon>Tracheophyta</taxon>
        <taxon>Spermatophyta</taxon>
        <taxon>Magnoliopsida</taxon>
        <taxon>eudicotyledons</taxon>
        <taxon>Gunneridae</taxon>
        <taxon>Pentapetalae</taxon>
        <taxon>rosids</taxon>
        <taxon>malvids</taxon>
        <taxon>Brassicales</taxon>
        <taxon>Brassicaceae</taxon>
        <taxon>Camelineae</taxon>
        <taxon>Arabidopsis</taxon>
    </lineage>
</organism>
<accession>Q9LIG2</accession>
<dbReference type="EC" id="2.7.10.1"/>
<dbReference type="EC" id="2.7.11.1"/>
<dbReference type="EMBL" id="FJ708725">
    <property type="protein sequence ID" value="ACN59320.1"/>
    <property type="molecule type" value="mRNA"/>
</dbReference>
<dbReference type="EMBL" id="AP001305">
    <property type="protein sequence ID" value="BAB03047.1"/>
    <property type="molecule type" value="Genomic_DNA"/>
</dbReference>
<dbReference type="EMBL" id="CP002686">
    <property type="protein sequence ID" value="AEE76495.1"/>
    <property type="molecule type" value="Genomic_DNA"/>
</dbReference>
<dbReference type="RefSeq" id="NP_188771.2">
    <property type="nucleotide sequence ID" value="NM_113029.4"/>
</dbReference>
<dbReference type="SMR" id="Q9LIG2"/>
<dbReference type="BioGRID" id="7020">
    <property type="interactions" value="30"/>
</dbReference>
<dbReference type="FunCoup" id="Q9LIG2">
    <property type="interactions" value="8"/>
</dbReference>
<dbReference type="IntAct" id="Q9LIG2">
    <property type="interactions" value="36"/>
</dbReference>
<dbReference type="STRING" id="3702.Q9LIG2"/>
<dbReference type="GlyGen" id="Q9LIG2">
    <property type="glycosylation" value="11 sites"/>
</dbReference>
<dbReference type="iPTMnet" id="Q9LIG2"/>
<dbReference type="PaxDb" id="3702-AT3G21340.1"/>
<dbReference type="ProteomicsDB" id="228169"/>
<dbReference type="EnsemblPlants" id="AT3G21340.1">
    <property type="protein sequence ID" value="AT3G21340.1"/>
    <property type="gene ID" value="AT3G21340"/>
</dbReference>
<dbReference type="GeneID" id="821688"/>
<dbReference type="Gramene" id="AT3G21340.1">
    <property type="protein sequence ID" value="AT3G21340.1"/>
    <property type="gene ID" value="AT3G21340"/>
</dbReference>
<dbReference type="KEGG" id="ath:AT3G21340"/>
<dbReference type="Araport" id="AT3G21340"/>
<dbReference type="TAIR" id="AT3G21340"/>
<dbReference type="eggNOG" id="ENOG502QQCZ">
    <property type="taxonomic scope" value="Eukaryota"/>
</dbReference>
<dbReference type="HOGENOM" id="CLU_000288_41_1_1"/>
<dbReference type="InParanoid" id="Q9LIG2"/>
<dbReference type="PhylomeDB" id="Q9LIG2"/>
<dbReference type="PRO" id="PR:Q9LIG2"/>
<dbReference type="Proteomes" id="UP000006548">
    <property type="component" value="Chromosome 3"/>
</dbReference>
<dbReference type="ExpressionAtlas" id="Q9LIG2">
    <property type="expression patterns" value="baseline and differential"/>
</dbReference>
<dbReference type="GO" id="GO:0005886">
    <property type="term" value="C:plasma membrane"/>
    <property type="evidence" value="ECO:0007669"/>
    <property type="project" value="UniProtKB-SubCell"/>
</dbReference>
<dbReference type="GO" id="GO:0005524">
    <property type="term" value="F:ATP binding"/>
    <property type="evidence" value="ECO:0007669"/>
    <property type="project" value="UniProtKB-KW"/>
</dbReference>
<dbReference type="GO" id="GO:0106310">
    <property type="term" value="F:protein serine kinase activity"/>
    <property type="evidence" value="ECO:0007669"/>
    <property type="project" value="RHEA"/>
</dbReference>
<dbReference type="GO" id="GO:0004674">
    <property type="term" value="F:protein serine/threonine kinase activity"/>
    <property type="evidence" value="ECO:0007669"/>
    <property type="project" value="UniProtKB-KW"/>
</dbReference>
<dbReference type="GO" id="GO:0004714">
    <property type="term" value="F:transmembrane receptor protein tyrosine kinase activity"/>
    <property type="evidence" value="ECO:0007669"/>
    <property type="project" value="UniProtKB-EC"/>
</dbReference>
<dbReference type="CDD" id="cd14066">
    <property type="entry name" value="STKc_IRAK"/>
    <property type="match status" value="1"/>
</dbReference>
<dbReference type="FunFam" id="3.80.10.10:FF:000129">
    <property type="entry name" value="Leucine-rich repeat receptor-like kinase"/>
    <property type="match status" value="1"/>
</dbReference>
<dbReference type="FunFam" id="3.30.200.20:FF:000394">
    <property type="entry name" value="Leucine-rich repeat receptor-like protein kinase"/>
    <property type="match status" value="1"/>
</dbReference>
<dbReference type="FunFam" id="1.10.510.10:FF:000146">
    <property type="entry name" value="LRR receptor-like serine/threonine-protein kinase IOS1"/>
    <property type="match status" value="1"/>
</dbReference>
<dbReference type="Gene3D" id="2.60.120.430">
    <property type="entry name" value="Galactose-binding lectin"/>
    <property type="match status" value="1"/>
</dbReference>
<dbReference type="Gene3D" id="3.30.200.20">
    <property type="entry name" value="Phosphorylase Kinase, domain 1"/>
    <property type="match status" value="1"/>
</dbReference>
<dbReference type="Gene3D" id="3.80.10.10">
    <property type="entry name" value="Ribonuclease Inhibitor"/>
    <property type="match status" value="1"/>
</dbReference>
<dbReference type="Gene3D" id="1.10.510.10">
    <property type="entry name" value="Transferase(Phosphotransferase) domain 1"/>
    <property type="match status" value="1"/>
</dbReference>
<dbReference type="InterPro" id="IPR011009">
    <property type="entry name" value="Kinase-like_dom_sf"/>
</dbReference>
<dbReference type="InterPro" id="IPR001611">
    <property type="entry name" value="Leu-rich_rpt"/>
</dbReference>
<dbReference type="InterPro" id="IPR032675">
    <property type="entry name" value="LRR_dom_sf"/>
</dbReference>
<dbReference type="InterPro" id="IPR024788">
    <property type="entry name" value="Malectin-like_Carb-bd_dom"/>
</dbReference>
<dbReference type="InterPro" id="IPR000719">
    <property type="entry name" value="Prot_kinase_dom"/>
</dbReference>
<dbReference type="InterPro" id="IPR017441">
    <property type="entry name" value="Protein_kinase_ATP_BS"/>
</dbReference>
<dbReference type="InterPro" id="IPR001245">
    <property type="entry name" value="Ser-Thr/Tyr_kinase_cat_dom"/>
</dbReference>
<dbReference type="InterPro" id="IPR008271">
    <property type="entry name" value="Ser/Thr_kinase_AS"/>
</dbReference>
<dbReference type="PANTHER" id="PTHR45631">
    <property type="entry name" value="OS07G0107800 PROTEIN-RELATED"/>
    <property type="match status" value="1"/>
</dbReference>
<dbReference type="PANTHER" id="PTHR45631:SF59">
    <property type="entry name" value="PROTEIN KINASE DOMAIN-CONTAINING PROTEIN"/>
    <property type="match status" value="1"/>
</dbReference>
<dbReference type="Pfam" id="PF13855">
    <property type="entry name" value="LRR_8"/>
    <property type="match status" value="1"/>
</dbReference>
<dbReference type="Pfam" id="PF12819">
    <property type="entry name" value="Malectin_like"/>
    <property type="match status" value="1"/>
</dbReference>
<dbReference type="Pfam" id="PF07714">
    <property type="entry name" value="PK_Tyr_Ser-Thr"/>
    <property type="match status" value="1"/>
</dbReference>
<dbReference type="SMART" id="SM00220">
    <property type="entry name" value="S_TKc"/>
    <property type="match status" value="1"/>
</dbReference>
<dbReference type="SUPFAM" id="SSF52058">
    <property type="entry name" value="L domain-like"/>
    <property type="match status" value="1"/>
</dbReference>
<dbReference type="SUPFAM" id="SSF56112">
    <property type="entry name" value="Protein kinase-like (PK-like)"/>
    <property type="match status" value="1"/>
</dbReference>
<dbReference type="PROSITE" id="PS00107">
    <property type="entry name" value="PROTEIN_KINASE_ATP"/>
    <property type="match status" value="1"/>
</dbReference>
<dbReference type="PROSITE" id="PS50011">
    <property type="entry name" value="PROTEIN_KINASE_DOM"/>
    <property type="match status" value="1"/>
</dbReference>
<dbReference type="PROSITE" id="PS00108">
    <property type="entry name" value="PROTEIN_KINASE_ST"/>
    <property type="match status" value="1"/>
</dbReference>
<feature type="signal peptide" evidence="2">
    <location>
        <begin position="1"/>
        <end position="27"/>
    </location>
</feature>
<feature type="chain" id="PRO_0000380728" description="Receptor-like protein kinase At3g21340">
    <location>
        <begin position="28"/>
        <end position="899"/>
    </location>
</feature>
<feature type="topological domain" description="Extracellular" evidence="2">
    <location>
        <begin position="28"/>
        <end position="522"/>
    </location>
</feature>
<feature type="transmembrane region" description="Helical" evidence="2">
    <location>
        <begin position="523"/>
        <end position="543"/>
    </location>
</feature>
<feature type="topological domain" description="Cytoplasmic" evidence="2">
    <location>
        <begin position="544"/>
        <end position="899"/>
    </location>
</feature>
<feature type="repeat" description="LRR 1">
    <location>
        <begin position="415"/>
        <end position="438"/>
    </location>
</feature>
<feature type="repeat" description="LRR 2">
    <location>
        <begin position="439"/>
        <end position="461"/>
    </location>
</feature>
<feature type="repeat" description="LRR 3">
    <location>
        <begin position="463"/>
        <end position="485"/>
    </location>
</feature>
<feature type="domain" description="Protein kinase" evidence="3">
    <location>
        <begin position="592"/>
        <end position="865"/>
    </location>
</feature>
<feature type="active site" description="Proton acceptor" evidence="3 4">
    <location>
        <position position="717"/>
    </location>
</feature>
<feature type="binding site" evidence="3">
    <location>
        <begin position="598"/>
        <end position="606"/>
    </location>
    <ligand>
        <name>ATP</name>
        <dbReference type="ChEBI" id="CHEBI:30616"/>
    </ligand>
</feature>
<feature type="binding site" evidence="3">
    <location>
        <position position="620"/>
    </location>
    <ligand>
        <name>ATP</name>
        <dbReference type="ChEBI" id="CHEBI:30616"/>
    </ligand>
</feature>
<feature type="modified residue" description="Phosphothreonine" evidence="1">
    <location>
        <position position="583"/>
    </location>
</feature>
<feature type="modified residue" description="Phosphotyrosine" evidence="1">
    <location>
        <position position="665"/>
    </location>
</feature>
<feature type="modified residue" description="Phosphoserine" evidence="1">
    <location>
        <position position="751"/>
    </location>
</feature>
<feature type="modified residue" description="Phosphothreonine" evidence="1">
    <location>
        <position position="752"/>
    </location>
</feature>
<feature type="modified residue" description="Phosphothreonine" evidence="1">
    <location>
        <position position="757"/>
    </location>
</feature>
<feature type="modified residue" description="Phosphotyrosine" evidence="1">
    <location>
        <position position="765"/>
    </location>
</feature>
<feature type="glycosylation site" description="N-linked (GlcNAc...) asparagine" evidence="2">
    <location>
        <position position="100"/>
    </location>
</feature>
<feature type="glycosylation site" description="N-linked (GlcNAc...) asparagine" evidence="2">
    <location>
        <position position="146"/>
    </location>
</feature>
<feature type="glycosylation site" description="N-linked (GlcNAc...) asparagine" evidence="2">
    <location>
        <position position="185"/>
    </location>
</feature>
<feature type="glycosylation site" description="N-linked (GlcNAc...) asparagine" evidence="2">
    <location>
        <position position="240"/>
    </location>
</feature>
<feature type="glycosylation site" description="N-linked (GlcNAc...) asparagine" evidence="2">
    <location>
        <position position="266"/>
    </location>
</feature>
<feature type="glycosylation site" description="N-linked (GlcNAc...) asparagine" evidence="2">
    <location>
        <position position="420"/>
    </location>
</feature>
<feature type="glycosylation site" description="N-linked (GlcNAc...) asparagine" evidence="2">
    <location>
        <position position="436"/>
    </location>
</feature>
<feature type="glycosylation site" description="N-linked (GlcNAc...) asparagine" evidence="2">
    <location>
        <position position="449"/>
    </location>
</feature>
<feature type="glycosylation site" description="N-linked (GlcNAc...) asparagine" evidence="2">
    <location>
        <position position="468"/>
    </location>
</feature>
<feature type="glycosylation site" description="N-linked (GlcNAc...) asparagine" evidence="2">
    <location>
        <position position="475"/>
    </location>
</feature>
<comment type="function">
    <text evidence="5">Probable receptor with a dual specificity kinase activity acting on both serine/threonine- and tyrosine-containing substrates.</text>
</comment>
<comment type="catalytic activity">
    <reaction>
        <text>L-seryl-[protein] + ATP = O-phospho-L-seryl-[protein] + ADP + H(+)</text>
        <dbReference type="Rhea" id="RHEA:17989"/>
        <dbReference type="Rhea" id="RHEA-COMP:9863"/>
        <dbReference type="Rhea" id="RHEA-COMP:11604"/>
        <dbReference type="ChEBI" id="CHEBI:15378"/>
        <dbReference type="ChEBI" id="CHEBI:29999"/>
        <dbReference type="ChEBI" id="CHEBI:30616"/>
        <dbReference type="ChEBI" id="CHEBI:83421"/>
        <dbReference type="ChEBI" id="CHEBI:456216"/>
        <dbReference type="EC" id="2.7.11.1"/>
    </reaction>
</comment>
<comment type="catalytic activity">
    <reaction>
        <text>L-threonyl-[protein] + ATP = O-phospho-L-threonyl-[protein] + ADP + H(+)</text>
        <dbReference type="Rhea" id="RHEA:46608"/>
        <dbReference type="Rhea" id="RHEA-COMP:11060"/>
        <dbReference type="Rhea" id="RHEA-COMP:11605"/>
        <dbReference type="ChEBI" id="CHEBI:15378"/>
        <dbReference type="ChEBI" id="CHEBI:30013"/>
        <dbReference type="ChEBI" id="CHEBI:30616"/>
        <dbReference type="ChEBI" id="CHEBI:61977"/>
        <dbReference type="ChEBI" id="CHEBI:456216"/>
        <dbReference type="EC" id="2.7.11.1"/>
    </reaction>
</comment>
<comment type="catalytic activity">
    <reaction evidence="4">
        <text>L-tyrosyl-[protein] + ATP = O-phospho-L-tyrosyl-[protein] + ADP + H(+)</text>
        <dbReference type="Rhea" id="RHEA:10596"/>
        <dbReference type="Rhea" id="RHEA-COMP:10136"/>
        <dbReference type="Rhea" id="RHEA-COMP:20101"/>
        <dbReference type="ChEBI" id="CHEBI:15378"/>
        <dbReference type="ChEBI" id="CHEBI:30616"/>
        <dbReference type="ChEBI" id="CHEBI:46858"/>
        <dbReference type="ChEBI" id="CHEBI:61978"/>
        <dbReference type="ChEBI" id="CHEBI:456216"/>
        <dbReference type="EC" id="2.7.10.1"/>
    </reaction>
</comment>
<comment type="interaction">
    <interactant intactId="EBI-941096">
        <id>Q9LIG2</id>
    </interactant>
    <interactant intactId="EBI-17070892">
        <id>C0LGI2</id>
        <label>At1g67720</label>
    </interactant>
    <organismsDiffer>false</organismsDiffer>
    <experiments>2</experiments>
</comment>
<comment type="interaction">
    <interactant intactId="EBI-941096">
        <id>Q9LIG2</id>
    </interactant>
    <interactant intactId="EBI-20654045">
        <id>A0A1I9LQ53</id>
        <label>At3g50230</label>
    </interactant>
    <organismsDiffer>false</organismsDiffer>
    <experiments>2</experiments>
</comment>
<comment type="interaction">
    <interactant intactId="EBI-941096">
        <id>Q9LIG2</id>
    </interactant>
    <interactant intactId="EBI-20654730">
        <id>Q9FK10</id>
        <label>At5g53320</label>
    </interactant>
    <organismsDiffer>false</organismsDiffer>
    <experiments>2</experiments>
</comment>
<comment type="interaction">
    <interactant intactId="EBI-941096">
        <id>Q9LIG2</id>
    </interactant>
    <interactant intactId="EBI-16946020">
        <id>O22138</id>
        <label>LRR-RLK</label>
    </interactant>
    <organismsDiffer>false</organismsDiffer>
    <experiments>2</experiments>
</comment>
<comment type="interaction">
    <interactant intactId="EBI-941096">
        <id>Q9LIG2</id>
    </interactant>
    <interactant intactId="EBI-1626936">
        <id>Q9LVI6</id>
        <label>RLK902</label>
    </interactant>
    <organismsDiffer>false</organismsDiffer>
    <experiments>2</experiments>
</comment>
<comment type="subcellular location">
    <subcellularLocation>
        <location evidence="6">Cell membrane</location>
        <topology evidence="6">Single-pass type I membrane protein</topology>
    </subcellularLocation>
</comment>
<comment type="PTM">
    <text>Autophosphorylated on Tyr and Thr residues.</text>
</comment>
<comment type="similarity">
    <text evidence="3">Belongs to the protein kinase superfamily. Ser/Thr protein kinase family.</text>
</comment>
<proteinExistence type="evidence at protein level"/>
<keyword id="KW-0067">ATP-binding</keyword>
<keyword id="KW-1003">Cell membrane</keyword>
<keyword id="KW-0325">Glycoprotein</keyword>
<keyword id="KW-0418">Kinase</keyword>
<keyword id="KW-0433">Leucine-rich repeat</keyword>
<keyword id="KW-0472">Membrane</keyword>
<keyword id="KW-0547">Nucleotide-binding</keyword>
<keyword id="KW-0597">Phosphoprotein</keyword>
<keyword id="KW-0675">Receptor</keyword>
<keyword id="KW-1185">Reference proteome</keyword>
<keyword id="KW-0677">Repeat</keyword>
<keyword id="KW-0723">Serine/threonine-protein kinase</keyword>
<keyword id="KW-0732">Signal</keyword>
<keyword id="KW-0808">Transferase</keyword>
<keyword id="KW-0812">Transmembrane</keyword>
<keyword id="KW-1133">Transmembrane helix</keyword>
<keyword id="KW-0829">Tyrosine-protein kinase</keyword>
<evidence type="ECO:0000250" key="1">
    <source>
        <dbReference type="UniProtKB" id="O48814"/>
    </source>
</evidence>
<evidence type="ECO:0000255" key="2"/>
<evidence type="ECO:0000255" key="3">
    <source>
        <dbReference type="PROSITE-ProRule" id="PRU00159"/>
    </source>
</evidence>
<evidence type="ECO:0000255" key="4">
    <source>
        <dbReference type="PROSITE-ProRule" id="PRU10027"/>
    </source>
</evidence>
<evidence type="ECO:0000269" key="5">
    <source>
    </source>
</evidence>
<evidence type="ECO:0000305" key="6"/>
<protein>
    <recommendedName>
        <fullName>Receptor-like protein kinase At3g21340</fullName>
        <ecNumber>2.7.10.1</ecNumber>
        <ecNumber>2.7.11.1</ecNumber>
    </recommendedName>
    <alternativeName>
        <fullName>Leucine-rich repeat receptor-like protein kinase At3g21340</fullName>
    </alternativeName>
</protein>